<dbReference type="EC" id="4.2.1.20" evidence="1"/>
<dbReference type="EMBL" id="CP001053">
    <property type="protein sequence ID" value="ACD21132.1"/>
    <property type="molecule type" value="Genomic_DNA"/>
</dbReference>
<dbReference type="RefSeq" id="WP_012428631.1">
    <property type="nucleotide sequence ID" value="NC_010676.1"/>
</dbReference>
<dbReference type="SMR" id="B2T9N0"/>
<dbReference type="STRING" id="398527.Bphyt_6840"/>
<dbReference type="KEGG" id="bpy:Bphyt_6840"/>
<dbReference type="eggNOG" id="COG0159">
    <property type="taxonomic scope" value="Bacteria"/>
</dbReference>
<dbReference type="HOGENOM" id="CLU_016734_0_0_4"/>
<dbReference type="OrthoDB" id="9804578at2"/>
<dbReference type="UniPathway" id="UPA00035">
    <property type="reaction ID" value="UER00044"/>
</dbReference>
<dbReference type="Proteomes" id="UP000001739">
    <property type="component" value="Chromosome 2"/>
</dbReference>
<dbReference type="GO" id="GO:0005829">
    <property type="term" value="C:cytosol"/>
    <property type="evidence" value="ECO:0007669"/>
    <property type="project" value="TreeGrafter"/>
</dbReference>
<dbReference type="GO" id="GO:0004834">
    <property type="term" value="F:tryptophan synthase activity"/>
    <property type="evidence" value="ECO:0007669"/>
    <property type="project" value="UniProtKB-UniRule"/>
</dbReference>
<dbReference type="CDD" id="cd04724">
    <property type="entry name" value="Tryptophan_synthase_alpha"/>
    <property type="match status" value="1"/>
</dbReference>
<dbReference type="FunFam" id="3.20.20.70:FF:000037">
    <property type="entry name" value="Tryptophan synthase alpha chain"/>
    <property type="match status" value="1"/>
</dbReference>
<dbReference type="Gene3D" id="3.20.20.70">
    <property type="entry name" value="Aldolase class I"/>
    <property type="match status" value="1"/>
</dbReference>
<dbReference type="HAMAP" id="MF_00131">
    <property type="entry name" value="Trp_synth_alpha"/>
    <property type="match status" value="1"/>
</dbReference>
<dbReference type="InterPro" id="IPR013785">
    <property type="entry name" value="Aldolase_TIM"/>
</dbReference>
<dbReference type="InterPro" id="IPR011060">
    <property type="entry name" value="RibuloseP-bd_barrel"/>
</dbReference>
<dbReference type="InterPro" id="IPR018204">
    <property type="entry name" value="Trp_synthase_alpha_AS"/>
</dbReference>
<dbReference type="InterPro" id="IPR002028">
    <property type="entry name" value="Trp_synthase_suA"/>
</dbReference>
<dbReference type="NCBIfam" id="TIGR00262">
    <property type="entry name" value="trpA"/>
    <property type="match status" value="1"/>
</dbReference>
<dbReference type="PANTHER" id="PTHR43406:SF1">
    <property type="entry name" value="TRYPTOPHAN SYNTHASE ALPHA CHAIN, CHLOROPLASTIC"/>
    <property type="match status" value="1"/>
</dbReference>
<dbReference type="PANTHER" id="PTHR43406">
    <property type="entry name" value="TRYPTOPHAN SYNTHASE, ALPHA CHAIN"/>
    <property type="match status" value="1"/>
</dbReference>
<dbReference type="Pfam" id="PF00290">
    <property type="entry name" value="Trp_syntA"/>
    <property type="match status" value="1"/>
</dbReference>
<dbReference type="SUPFAM" id="SSF51366">
    <property type="entry name" value="Ribulose-phoshate binding barrel"/>
    <property type="match status" value="1"/>
</dbReference>
<dbReference type="PROSITE" id="PS00167">
    <property type="entry name" value="TRP_SYNTHASE_ALPHA"/>
    <property type="match status" value="1"/>
</dbReference>
<reference key="1">
    <citation type="journal article" date="2011" name="J. Bacteriol.">
        <title>Complete genome sequence of the plant growth-promoting endophyte Burkholderia phytofirmans strain PsJN.</title>
        <authorList>
            <person name="Weilharter A."/>
            <person name="Mitter B."/>
            <person name="Shin M.V."/>
            <person name="Chain P.S."/>
            <person name="Nowak J."/>
            <person name="Sessitsch A."/>
        </authorList>
    </citation>
    <scope>NUCLEOTIDE SEQUENCE [LARGE SCALE GENOMIC DNA]</scope>
    <source>
        <strain>DSM 17436 / LMG 22146 / PsJN</strain>
    </source>
</reference>
<accession>B2T9N0</accession>
<name>TRPA_PARPJ</name>
<keyword id="KW-0028">Amino-acid biosynthesis</keyword>
<keyword id="KW-0057">Aromatic amino acid biosynthesis</keyword>
<keyword id="KW-0456">Lyase</keyword>
<keyword id="KW-0822">Tryptophan biosynthesis</keyword>
<organism>
    <name type="scientific">Paraburkholderia phytofirmans (strain DSM 17436 / LMG 22146 / PsJN)</name>
    <name type="common">Burkholderia phytofirmans</name>
    <dbReference type="NCBI Taxonomy" id="398527"/>
    <lineage>
        <taxon>Bacteria</taxon>
        <taxon>Pseudomonadati</taxon>
        <taxon>Pseudomonadota</taxon>
        <taxon>Betaproteobacteria</taxon>
        <taxon>Burkholderiales</taxon>
        <taxon>Burkholderiaceae</taxon>
        <taxon>Paraburkholderia</taxon>
    </lineage>
</organism>
<protein>
    <recommendedName>
        <fullName evidence="1">Tryptophan synthase alpha chain</fullName>
        <ecNumber evidence="1">4.2.1.20</ecNumber>
    </recommendedName>
</protein>
<comment type="function">
    <text evidence="1">The alpha subunit is responsible for the aldol cleavage of indoleglycerol phosphate to indole and glyceraldehyde 3-phosphate.</text>
</comment>
<comment type="catalytic activity">
    <reaction evidence="1">
        <text>(1S,2R)-1-C-(indol-3-yl)glycerol 3-phosphate + L-serine = D-glyceraldehyde 3-phosphate + L-tryptophan + H2O</text>
        <dbReference type="Rhea" id="RHEA:10532"/>
        <dbReference type="ChEBI" id="CHEBI:15377"/>
        <dbReference type="ChEBI" id="CHEBI:33384"/>
        <dbReference type="ChEBI" id="CHEBI:57912"/>
        <dbReference type="ChEBI" id="CHEBI:58866"/>
        <dbReference type="ChEBI" id="CHEBI:59776"/>
        <dbReference type="EC" id="4.2.1.20"/>
    </reaction>
</comment>
<comment type="pathway">
    <text evidence="1">Amino-acid biosynthesis; L-tryptophan biosynthesis; L-tryptophan from chorismate: step 5/5.</text>
</comment>
<comment type="subunit">
    <text evidence="1">Tetramer of two alpha and two beta chains.</text>
</comment>
<comment type="similarity">
    <text evidence="1">Belongs to the TrpA family.</text>
</comment>
<feature type="chain" id="PRO_1000095701" description="Tryptophan synthase alpha chain">
    <location>
        <begin position="1"/>
        <end position="270"/>
    </location>
</feature>
<feature type="active site" description="Proton acceptor" evidence="1">
    <location>
        <position position="49"/>
    </location>
</feature>
<feature type="active site" description="Proton acceptor" evidence="1">
    <location>
        <position position="60"/>
    </location>
</feature>
<proteinExistence type="inferred from homology"/>
<sequence length="270" mass="28338">MSRIKNTFAALSAQGKKGLIPFMTAGDPDPARTVEFMHALAAGGADVIELGVPFSDPMADGPVIQQSSERALAHGVSLRHVIADVKRFRETNDTTPVVLMGYANPIERMGTEAFAKAAKEAGVDGVLVVDYPPEECANFAEQMQSAGIDPIFLLAPTSTDERIAEVGKIASGYVYYVSLKGVTGAANLDVSSIASKIPAIKSRVPLPVGVGFGIRDAQTARSVAEVSDAVVIGSRIVQLLEQAAPEAAAETLTRFVAEVREALDSVATAR</sequence>
<evidence type="ECO:0000255" key="1">
    <source>
        <dbReference type="HAMAP-Rule" id="MF_00131"/>
    </source>
</evidence>
<gene>
    <name evidence="1" type="primary">trpA</name>
    <name type="ordered locus">Bphyt_6840</name>
</gene>